<proteinExistence type="predicted"/>
<protein>
    <recommendedName>
        <fullName>Uncharacterized protein MJ1450</fullName>
    </recommendedName>
</protein>
<sequence>MYDFAIIGSGVAGATLAKELRYRYKVAVIEKGKKPSYASEGKNVEINYVYGLGGSGVYSLGNAIKTEIKGYKIDKDIYKEIWEELKIKAPKDDFLNDIDKAFIELGFEKMEKFIDFDRCNKCGECARKICKAKWTPLNYLKESNANIITEFNIKAINYSNYYEILDDKGRKIKAKNLIISAGGINSPRILKKMIDDENIGKNLFIDTFVTVGGILEDSYLNKDISMLVYKKYKNFMLATHYSKLLINEIKKDYKDVKEKDIVGIMIKIKDENNGVVLDNDVKKEITKEDFKTLARGICKATKYLYKLGVDDIYTTIPRGSHPGGSLSLVVDEFEVREGLYVCDASLFKEALGVPPIVSIIALSKKFVREIL</sequence>
<dbReference type="EMBL" id="L77117">
    <property type="protein sequence ID" value="AAB99458.1"/>
    <property type="molecule type" value="Genomic_DNA"/>
</dbReference>
<dbReference type="PIR" id="A64481">
    <property type="entry name" value="A64481"/>
</dbReference>
<dbReference type="RefSeq" id="WP_010870970.1">
    <property type="nucleotide sequence ID" value="NC_000909.1"/>
</dbReference>
<dbReference type="SMR" id="Q58845"/>
<dbReference type="STRING" id="243232.MJ_1450"/>
<dbReference type="PaxDb" id="243232-MJ_1450"/>
<dbReference type="DNASU" id="1452354"/>
<dbReference type="EnsemblBacteria" id="AAB99458">
    <property type="protein sequence ID" value="AAB99458"/>
    <property type="gene ID" value="MJ_1450"/>
</dbReference>
<dbReference type="GeneID" id="1452354"/>
<dbReference type="KEGG" id="mja:MJ_1450"/>
<dbReference type="eggNOG" id="arCOG02232">
    <property type="taxonomic scope" value="Archaea"/>
</dbReference>
<dbReference type="HOGENOM" id="CLU_052500_0_0_2"/>
<dbReference type="InParanoid" id="Q58845"/>
<dbReference type="OrthoDB" id="346033at2157"/>
<dbReference type="Proteomes" id="UP000000805">
    <property type="component" value="Chromosome"/>
</dbReference>
<dbReference type="GO" id="GO:0005506">
    <property type="term" value="F:iron ion binding"/>
    <property type="evidence" value="ECO:0000318"/>
    <property type="project" value="GO_Central"/>
</dbReference>
<dbReference type="GO" id="GO:0052837">
    <property type="term" value="P:thiazole biosynthetic process"/>
    <property type="evidence" value="ECO:0000318"/>
    <property type="project" value="GO_Central"/>
</dbReference>
<dbReference type="Gene3D" id="3.50.50.60">
    <property type="entry name" value="FAD/NAD(P)-binding domain"/>
    <property type="match status" value="1"/>
</dbReference>
<dbReference type="InterPro" id="IPR017896">
    <property type="entry name" value="4Fe4S_Fe-S-bd"/>
</dbReference>
<dbReference type="InterPro" id="IPR036188">
    <property type="entry name" value="FAD/NAD-bd_sf"/>
</dbReference>
<dbReference type="PANTHER" id="PTHR43422">
    <property type="entry name" value="THIAMINE THIAZOLE SYNTHASE"/>
    <property type="match status" value="1"/>
</dbReference>
<dbReference type="PANTHER" id="PTHR43422:SF3">
    <property type="entry name" value="THIAMINE THIAZOLE SYNTHASE"/>
    <property type="match status" value="1"/>
</dbReference>
<dbReference type="Pfam" id="PF13450">
    <property type="entry name" value="NAD_binding_8"/>
    <property type="match status" value="1"/>
</dbReference>
<dbReference type="SUPFAM" id="SSF51905">
    <property type="entry name" value="FAD/NAD(P)-binding domain"/>
    <property type="match status" value="1"/>
</dbReference>
<dbReference type="PROSITE" id="PS51379">
    <property type="entry name" value="4FE4S_FER_2"/>
    <property type="match status" value="1"/>
</dbReference>
<name>Y1450_METJA</name>
<feature type="chain" id="PRO_0000107337" description="Uncharacterized protein MJ1450">
    <location>
        <begin position="1"/>
        <end position="371"/>
    </location>
</feature>
<feature type="domain" description="4Fe-4S ferredoxin-type" evidence="1">
    <location>
        <begin position="110"/>
        <end position="140"/>
    </location>
</feature>
<organism>
    <name type="scientific">Methanocaldococcus jannaschii (strain ATCC 43067 / DSM 2661 / JAL-1 / JCM 10045 / NBRC 100440)</name>
    <name type="common">Methanococcus jannaschii</name>
    <dbReference type="NCBI Taxonomy" id="243232"/>
    <lineage>
        <taxon>Archaea</taxon>
        <taxon>Methanobacteriati</taxon>
        <taxon>Methanobacteriota</taxon>
        <taxon>Methanomada group</taxon>
        <taxon>Methanococci</taxon>
        <taxon>Methanococcales</taxon>
        <taxon>Methanocaldococcaceae</taxon>
        <taxon>Methanocaldococcus</taxon>
    </lineage>
</organism>
<reference key="1">
    <citation type="journal article" date="1996" name="Science">
        <title>Complete genome sequence of the methanogenic archaeon, Methanococcus jannaschii.</title>
        <authorList>
            <person name="Bult C.J."/>
            <person name="White O."/>
            <person name="Olsen G.J."/>
            <person name="Zhou L."/>
            <person name="Fleischmann R.D."/>
            <person name="Sutton G.G."/>
            <person name="Blake J.A."/>
            <person name="FitzGerald L.M."/>
            <person name="Clayton R.A."/>
            <person name="Gocayne J.D."/>
            <person name="Kerlavage A.R."/>
            <person name="Dougherty B.A."/>
            <person name="Tomb J.-F."/>
            <person name="Adams M.D."/>
            <person name="Reich C.I."/>
            <person name="Overbeek R."/>
            <person name="Kirkness E.F."/>
            <person name="Weinstock K.G."/>
            <person name="Merrick J.M."/>
            <person name="Glodek A."/>
            <person name="Scott J.L."/>
            <person name="Geoghagen N.S.M."/>
            <person name="Weidman J.F."/>
            <person name="Fuhrmann J.L."/>
            <person name="Nguyen D."/>
            <person name="Utterback T.R."/>
            <person name="Kelley J.M."/>
            <person name="Peterson J.D."/>
            <person name="Sadow P.W."/>
            <person name="Hanna M.C."/>
            <person name="Cotton M.D."/>
            <person name="Roberts K.M."/>
            <person name="Hurst M.A."/>
            <person name="Kaine B.P."/>
            <person name="Borodovsky M."/>
            <person name="Klenk H.-P."/>
            <person name="Fraser C.M."/>
            <person name="Smith H.O."/>
            <person name="Woese C.R."/>
            <person name="Venter J.C."/>
        </authorList>
    </citation>
    <scope>NUCLEOTIDE SEQUENCE [LARGE SCALE GENOMIC DNA]</scope>
    <source>
        <strain>ATCC 43067 / DSM 2661 / JAL-1 / JCM 10045 / NBRC 100440</strain>
    </source>
</reference>
<keyword id="KW-1185">Reference proteome</keyword>
<accession>Q58845</accession>
<evidence type="ECO:0000255" key="1">
    <source>
        <dbReference type="PROSITE-ProRule" id="PRU00711"/>
    </source>
</evidence>
<gene>
    <name type="ordered locus">MJ1450</name>
</gene>